<reference key="1">
    <citation type="journal article" date="2004" name="J. Bacteriol.">
        <title>Complete genome sequence of Rickettsia typhi and comparison with sequences of other Rickettsiae.</title>
        <authorList>
            <person name="McLeod M.P."/>
            <person name="Qin X."/>
            <person name="Karpathy S.E."/>
            <person name="Gioia J."/>
            <person name="Highlander S.K."/>
            <person name="Fox G.E."/>
            <person name="McNeill T.Z."/>
            <person name="Jiang H."/>
            <person name="Muzny D."/>
            <person name="Jacob L.S."/>
            <person name="Hawes A.C."/>
            <person name="Sodergren E."/>
            <person name="Gill R."/>
            <person name="Hume J."/>
            <person name="Morgan M."/>
            <person name="Fan G."/>
            <person name="Amin A.G."/>
            <person name="Gibbs R.A."/>
            <person name="Hong C."/>
            <person name="Yu X.-J."/>
            <person name="Walker D.H."/>
            <person name="Weinstock G.M."/>
        </authorList>
    </citation>
    <scope>NUCLEOTIDE SEQUENCE [LARGE SCALE GENOMIC DNA]</scope>
    <source>
        <strain>ATCC VR-144 / Wilmington</strain>
    </source>
</reference>
<comment type="function">
    <text evidence="1">Catalyzes the attachment of glutamate to tRNA(Glu) in a two-step reaction: glutamate is first activated by ATP to form Glu-AMP and then transferred to the acceptor end of tRNA(Glu).</text>
</comment>
<comment type="catalytic activity">
    <reaction evidence="1">
        <text>tRNA(Glu) + L-glutamate + ATP = L-glutamyl-tRNA(Glu) + AMP + diphosphate</text>
        <dbReference type="Rhea" id="RHEA:23540"/>
        <dbReference type="Rhea" id="RHEA-COMP:9663"/>
        <dbReference type="Rhea" id="RHEA-COMP:9680"/>
        <dbReference type="ChEBI" id="CHEBI:29985"/>
        <dbReference type="ChEBI" id="CHEBI:30616"/>
        <dbReference type="ChEBI" id="CHEBI:33019"/>
        <dbReference type="ChEBI" id="CHEBI:78442"/>
        <dbReference type="ChEBI" id="CHEBI:78520"/>
        <dbReference type="ChEBI" id="CHEBI:456215"/>
        <dbReference type="EC" id="6.1.1.17"/>
    </reaction>
</comment>
<comment type="subunit">
    <text evidence="1">Monomer.</text>
</comment>
<comment type="subcellular location">
    <subcellularLocation>
        <location evidence="1">Cytoplasm</location>
    </subcellularLocation>
</comment>
<comment type="similarity">
    <text evidence="1">Belongs to the class-I aminoacyl-tRNA synthetase family. Glutamate--tRNA ligase type 1 subfamily.</text>
</comment>
<gene>
    <name evidence="1" type="primary">gltX2</name>
    <name type="ordered locus">RT0614</name>
</gene>
<dbReference type="EC" id="6.1.1.17" evidence="1"/>
<dbReference type="EMBL" id="AE017197">
    <property type="protein sequence ID" value="AAU04078.1"/>
    <property type="molecule type" value="Genomic_DNA"/>
</dbReference>
<dbReference type="SMR" id="Q68WB4"/>
<dbReference type="KEGG" id="rty:RT0614"/>
<dbReference type="eggNOG" id="COG0008">
    <property type="taxonomic scope" value="Bacteria"/>
</dbReference>
<dbReference type="HOGENOM" id="CLU_015768_6_3_5"/>
<dbReference type="OrthoDB" id="9807503at2"/>
<dbReference type="Proteomes" id="UP000000604">
    <property type="component" value="Chromosome"/>
</dbReference>
<dbReference type="GO" id="GO:0005829">
    <property type="term" value="C:cytosol"/>
    <property type="evidence" value="ECO:0007669"/>
    <property type="project" value="TreeGrafter"/>
</dbReference>
<dbReference type="GO" id="GO:0005524">
    <property type="term" value="F:ATP binding"/>
    <property type="evidence" value="ECO:0007669"/>
    <property type="project" value="UniProtKB-UniRule"/>
</dbReference>
<dbReference type="GO" id="GO:0004818">
    <property type="term" value="F:glutamate-tRNA ligase activity"/>
    <property type="evidence" value="ECO:0007669"/>
    <property type="project" value="UniProtKB-UniRule"/>
</dbReference>
<dbReference type="GO" id="GO:0000049">
    <property type="term" value="F:tRNA binding"/>
    <property type="evidence" value="ECO:0007669"/>
    <property type="project" value="InterPro"/>
</dbReference>
<dbReference type="GO" id="GO:0008270">
    <property type="term" value="F:zinc ion binding"/>
    <property type="evidence" value="ECO:0007669"/>
    <property type="project" value="InterPro"/>
</dbReference>
<dbReference type="GO" id="GO:0006424">
    <property type="term" value="P:glutamyl-tRNA aminoacylation"/>
    <property type="evidence" value="ECO:0007669"/>
    <property type="project" value="UniProtKB-UniRule"/>
</dbReference>
<dbReference type="CDD" id="cd00808">
    <property type="entry name" value="GluRS_core"/>
    <property type="match status" value="1"/>
</dbReference>
<dbReference type="FunFam" id="3.40.50.620:FF:000007">
    <property type="entry name" value="Glutamate--tRNA ligase"/>
    <property type="match status" value="1"/>
</dbReference>
<dbReference type="Gene3D" id="1.10.10.350">
    <property type="match status" value="1"/>
</dbReference>
<dbReference type="Gene3D" id="3.40.50.620">
    <property type="entry name" value="HUPs"/>
    <property type="match status" value="1"/>
</dbReference>
<dbReference type="HAMAP" id="MF_00022">
    <property type="entry name" value="Glu_tRNA_synth_type1"/>
    <property type="match status" value="1"/>
</dbReference>
<dbReference type="InterPro" id="IPR045462">
    <property type="entry name" value="aa-tRNA-synth_I_cd-bd"/>
</dbReference>
<dbReference type="InterPro" id="IPR020751">
    <property type="entry name" value="aa-tRNA-synth_I_codon-bd_sub2"/>
</dbReference>
<dbReference type="InterPro" id="IPR008925">
    <property type="entry name" value="aa_tRNA-synth_I_cd-bd_sf"/>
</dbReference>
<dbReference type="InterPro" id="IPR004527">
    <property type="entry name" value="Glu-tRNA-ligase_bac/mito"/>
</dbReference>
<dbReference type="InterPro" id="IPR000924">
    <property type="entry name" value="Glu/Gln-tRNA-synth"/>
</dbReference>
<dbReference type="InterPro" id="IPR020058">
    <property type="entry name" value="Glu/Gln-tRNA-synth_Ib_cat-dom"/>
</dbReference>
<dbReference type="InterPro" id="IPR049940">
    <property type="entry name" value="GluQ/Sye"/>
</dbReference>
<dbReference type="InterPro" id="IPR033910">
    <property type="entry name" value="GluRS_core"/>
</dbReference>
<dbReference type="InterPro" id="IPR014729">
    <property type="entry name" value="Rossmann-like_a/b/a_fold"/>
</dbReference>
<dbReference type="NCBIfam" id="TIGR00464">
    <property type="entry name" value="gltX_bact"/>
    <property type="match status" value="1"/>
</dbReference>
<dbReference type="PANTHER" id="PTHR43311">
    <property type="entry name" value="GLUTAMATE--TRNA LIGASE"/>
    <property type="match status" value="1"/>
</dbReference>
<dbReference type="PANTHER" id="PTHR43311:SF2">
    <property type="entry name" value="GLUTAMATE--TRNA LIGASE, MITOCHONDRIAL-RELATED"/>
    <property type="match status" value="1"/>
</dbReference>
<dbReference type="Pfam" id="PF19269">
    <property type="entry name" value="Anticodon_2"/>
    <property type="match status" value="1"/>
</dbReference>
<dbReference type="Pfam" id="PF00749">
    <property type="entry name" value="tRNA-synt_1c"/>
    <property type="match status" value="1"/>
</dbReference>
<dbReference type="PRINTS" id="PR00987">
    <property type="entry name" value="TRNASYNTHGLU"/>
</dbReference>
<dbReference type="SUPFAM" id="SSF48163">
    <property type="entry name" value="An anticodon-binding domain of class I aminoacyl-tRNA synthetases"/>
    <property type="match status" value="1"/>
</dbReference>
<dbReference type="SUPFAM" id="SSF52374">
    <property type="entry name" value="Nucleotidylyl transferase"/>
    <property type="match status" value="1"/>
</dbReference>
<accession>Q68WB4</accession>
<evidence type="ECO:0000255" key="1">
    <source>
        <dbReference type="HAMAP-Rule" id="MF_00022"/>
    </source>
</evidence>
<proteinExistence type="inferred from homology"/>
<organism>
    <name type="scientific">Rickettsia typhi (strain ATCC VR-144 / Wilmington)</name>
    <dbReference type="NCBI Taxonomy" id="257363"/>
    <lineage>
        <taxon>Bacteria</taxon>
        <taxon>Pseudomonadati</taxon>
        <taxon>Pseudomonadota</taxon>
        <taxon>Alphaproteobacteria</taxon>
        <taxon>Rickettsiales</taxon>
        <taxon>Rickettsiaceae</taxon>
        <taxon>Rickettsieae</taxon>
        <taxon>Rickettsia</taxon>
        <taxon>typhus group</taxon>
    </lineage>
</organism>
<name>SYE2_RICTY</name>
<protein>
    <recommendedName>
        <fullName evidence="1">Glutamate--tRNA ligase 2</fullName>
        <ecNumber evidence="1">6.1.1.17</ecNumber>
    </recommendedName>
    <alternativeName>
        <fullName evidence="1">Glutamyl-tRNA synthetase 2</fullName>
        <shortName evidence="1">GluRS 2</shortName>
    </alternativeName>
</protein>
<feature type="chain" id="PRO_0000119643" description="Glutamate--tRNA ligase 2">
    <location>
        <begin position="1"/>
        <end position="469"/>
    </location>
</feature>
<feature type="short sequence motif" description="'HIGH' region" evidence="1">
    <location>
        <begin position="10"/>
        <end position="20"/>
    </location>
</feature>
<feature type="short sequence motif" description="'KMSKS' region" evidence="1">
    <location>
        <begin position="239"/>
        <end position="243"/>
    </location>
</feature>
<feature type="binding site" evidence="1">
    <location>
        <position position="242"/>
    </location>
    <ligand>
        <name>ATP</name>
        <dbReference type="ChEBI" id="CHEBI:30616"/>
    </ligand>
</feature>
<keyword id="KW-0030">Aminoacyl-tRNA synthetase</keyword>
<keyword id="KW-0067">ATP-binding</keyword>
<keyword id="KW-0963">Cytoplasm</keyword>
<keyword id="KW-0436">Ligase</keyword>
<keyword id="KW-0547">Nucleotide-binding</keyword>
<keyword id="KW-0648">Protein biosynthesis</keyword>
<sequence length="469" mass="53447">MTNIITRFAPSPTGFLHIGSARTALFNYLFARHNNGKFFLRIEDTDKKRSTKEAIAAIFSGLKWLGINWDGEVIFQSKRNSLYKEAALKLLKEGKAYYCFTKQEEIARQRQQALKDKKHFIFNSEWRDKGPSTYPADIKPVIRLKVPREGSITIHDTLQGDIVIENSHIDDMILIRADGTATYMLAVIVDDHDMGITHIIRGDDHLTNAARQIAIYHAFGYEVPNMTHIPLIHGADGTKLSKRHGALGVEAYKDMGYLPESLCNYLLRLGWSHGDDEIISMNQAIEWFNLDSLGKSPSKLDFAKMNSINSHYLRMLDNDSLTSKTVAILKQNYKISEKEVSYIKQAMPSLIVRSATLIDLAQLAYIYLVDSPMIYNQDAKEVIKNCDKDLIKQIIANLNKLEQFDKECIQNKFKEIAIYNGLKLNDIMRPVRALITGMTASPSIFEIAETLGKENILKRLNIIYYNLNF</sequence>